<comment type="catalytic activity">
    <reaction>
        <text>D-ribulose 5-phosphate + ATP = D-ribulose 1,5-bisphosphate + ADP + H(+)</text>
        <dbReference type="Rhea" id="RHEA:19365"/>
        <dbReference type="ChEBI" id="CHEBI:15378"/>
        <dbReference type="ChEBI" id="CHEBI:30616"/>
        <dbReference type="ChEBI" id="CHEBI:57870"/>
        <dbReference type="ChEBI" id="CHEBI:58121"/>
        <dbReference type="ChEBI" id="CHEBI:456216"/>
        <dbReference type="EC" id="2.7.1.19"/>
    </reaction>
</comment>
<comment type="pathway">
    <text>Carbohydrate biosynthesis; Calvin cycle.</text>
</comment>
<comment type="subunit">
    <text>Heterodimer of a 40 kDa and a 41 kDa subunit.</text>
</comment>
<comment type="similarity">
    <text evidence="1">Belongs to the phosphoribulokinase family.</text>
</comment>
<evidence type="ECO:0000305" key="1"/>
<reference key="1">
    <citation type="journal article" date="1992" name="Plant Physiol.">
        <title>Purification and molecular and immunological characterization of a unique phosphoribulokinase from the green alga Selenastrum minutum.</title>
        <authorList>
            <person name="Lin M."/>
            <person name="Turpin D.H."/>
        </authorList>
    </citation>
    <scope>PROTEIN SEQUENCE</scope>
</reference>
<name>KPPR1_SELMI</name>
<sequence length="14" mass="1381">XEKXIVVGLAADSG</sequence>
<keyword id="KW-0067">ATP-binding</keyword>
<keyword id="KW-0113">Calvin cycle</keyword>
<keyword id="KW-0903">Direct protein sequencing</keyword>
<keyword id="KW-0418">Kinase</keyword>
<keyword id="KW-0547">Nucleotide-binding</keyword>
<keyword id="KW-0808">Transferase</keyword>
<dbReference type="EC" id="2.7.1.19"/>
<dbReference type="UniPathway" id="UPA00116"/>
<dbReference type="GO" id="GO:0005524">
    <property type="term" value="F:ATP binding"/>
    <property type="evidence" value="ECO:0007669"/>
    <property type="project" value="UniProtKB-KW"/>
</dbReference>
<dbReference type="GO" id="GO:0008974">
    <property type="term" value="F:phosphoribulokinase activity"/>
    <property type="evidence" value="ECO:0007669"/>
    <property type="project" value="UniProtKB-EC"/>
</dbReference>
<dbReference type="GO" id="GO:0019253">
    <property type="term" value="P:reductive pentose-phosphate cycle"/>
    <property type="evidence" value="ECO:0007669"/>
    <property type="project" value="UniProtKB-UniPathway"/>
</dbReference>
<protein>
    <recommendedName>
        <fullName>Phosphoribulokinase, 40 kDa subunit</fullName>
        <ecNumber>2.7.1.19</ecNumber>
    </recommendedName>
    <alternativeName>
        <fullName>Phosphopentokinase</fullName>
    </alternativeName>
</protein>
<proteinExistence type="evidence at protein level"/>
<feature type="chain" id="PRO_0000201962" description="Phosphoribulokinase, 40 kDa subunit">
    <location>
        <begin position="1"/>
        <end position="14" status="greater than"/>
    </location>
</feature>
<feature type="non-terminal residue">
    <location>
        <position position="14"/>
    </location>
</feature>
<organism>
    <name type="scientific">Selenastrum minutum</name>
    <dbReference type="NCBI Taxonomy" id="39955"/>
    <lineage>
        <taxon>Eukaryota</taxon>
        <taxon>Viridiplantae</taxon>
        <taxon>Chlorophyta</taxon>
        <taxon>core chlorophytes</taxon>
        <taxon>Chlorophyceae</taxon>
        <taxon>CS clade</taxon>
        <taxon>Sphaeropleales</taxon>
        <taxon>Selenastraceae</taxon>
        <taxon>Monoraphidium</taxon>
    </lineage>
</organism>
<accession>P25933</accession>